<dbReference type="EC" id="2.3.1.234" evidence="1"/>
<dbReference type="EMBL" id="AM999887">
    <property type="protein sequence ID" value="CAQ54894.1"/>
    <property type="molecule type" value="Genomic_DNA"/>
</dbReference>
<dbReference type="RefSeq" id="WP_007302199.1">
    <property type="nucleotide sequence ID" value="NC_010981.1"/>
</dbReference>
<dbReference type="SMR" id="B3CLX6"/>
<dbReference type="KEGG" id="wpi:WP0786"/>
<dbReference type="eggNOG" id="COG0533">
    <property type="taxonomic scope" value="Bacteria"/>
</dbReference>
<dbReference type="HOGENOM" id="CLU_023208_0_2_5"/>
<dbReference type="Proteomes" id="UP000008814">
    <property type="component" value="Chromosome"/>
</dbReference>
<dbReference type="GO" id="GO:0005737">
    <property type="term" value="C:cytoplasm"/>
    <property type="evidence" value="ECO:0007669"/>
    <property type="project" value="UniProtKB-SubCell"/>
</dbReference>
<dbReference type="GO" id="GO:0005506">
    <property type="term" value="F:iron ion binding"/>
    <property type="evidence" value="ECO:0007669"/>
    <property type="project" value="UniProtKB-UniRule"/>
</dbReference>
<dbReference type="GO" id="GO:0061711">
    <property type="term" value="F:N(6)-L-threonylcarbamoyladenine synthase activity"/>
    <property type="evidence" value="ECO:0007669"/>
    <property type="project" value="UniProtKB-EC"/>
</dbReference>
<dbReference type="GO" id="GO:0002949">
    <property type="term" value="P:tRNA threonylcarbamoyladenosine modification"/>
    <property type="evidence" value="ECO:0007669"/>
    <property type="project" value="UniProtKB-UniRule"/>
</dbReference>
<dbReference type="CDD" id="cd24133">
    <property type="entry name" value="ASKHA_NBD_TsaD_bac"/>
    <property type="match status" value="1"/>
</dbReference>
<dbReference type="FunFam" id="3.30.420.40:FF:000012">
    <property type="entry name" value="tRNA N6-adenosine threonylcarbamoyltransferase"/>
    <property type="match status" value="1"/>
</dbReference>
<dbReference type="Gene3D" id="3.30.420.40">
    <property type="match status" value="2"/>
</dbReference>
<dbReference type="HAMAP" id="MF_01445">
    <property type="entry name" value="TsaD"/>
    <property type="match status" value="1"/>
</dbReference>
<dbReference type="InterPro" id="IPR043129">
    <property type="entry name" value="ATPase_NBD"/>
</dbReference>
<dbReference type="InterPro" id="IPR000905">
    <property type="entry name" value="Gcp-like_dom"/>
</dbReference>
<dbReference type="InterPro" id="IPR017861">
    <property type="entry name" value="KAE1/TsaD"/>
</dbReference>
<dbReference type="InterPro" id="IPR022450">
    <property type="entry name" value="TsaD"/>
</dbReference>
<dbReference type="NCBIfam" id="TIGR00329">
    <property type="entry name" value="gcp_kae1"/>
    <property type="match status" value="1"/>
</dbReference>
<dbReference type="NCBIfam" id="TIGR03723">
    <property type="entry name" value="T6A_TsaD_YgjD"/>
    <property type="match status" value="1"/>
</dbReference>
<dbReference type="PANTHER" id="PTHR11735">
    <property type="entry name" value="TRNA N6-ADENOSINE THREONYLCARBAMOYLTRANSFERASE"/>
    <property type="match status" value="1"/>
</dbReference>
<dbReference type="PANTHER" id="PTHR11735:SF6">
    <property type="entry name" value="TRNA N6-ADENOSINE THREONYLCARBAMOYLTRANSFERASE, MITOCHONDRIAL"/>
    <property type="match status" value="1"/>
</dbReference>
<dbReference type="Pfam" id="PF00814">
    <property type="entry name" value="TsaD"/>
    <property type="match status" value="1"/>
</dbReference>
<dbReference type="PRINTS" id="PR00789">
    <property type="entry name" value="OSIALOPTASE"/>
</dbReference>
<dbReference type="SUPFAM" id="SSF53067">
    <property type="entry name" value="Actin-like ATPase domain"/>
    <property type="match status" value="1"/>
</dbReference>
<evidence type="ECO:0000255" key="1">
    <source>
        <dbReference type="HAMAP-Rule" id="MF_01445"/>
    </source>
</evidence>
<organism>
    <name type="scientific">Wolbachia pipientis subsp. Culex pipiens (strain wPip)</name>
    <dbReference type="NCBI Taxonomy" id="570417"/>
    <lineage>
        <taxon>Bacteria</taxon>
        <taxon>Pseudomonadati</taxon>
        <taxon>Pseudomonadota</taxon>
        <taxon>Alphaproteobacteria</taxon>
        <taxon>Rickettsiales</taxon>
        <taxon>Anaplasmataceae</taxon>
        <taxon>Wolbachieae</taxon>
        <taxon>Wolbachia</taxon>
    </lineage>
</organism>
<reference key="1">
    <citation type="journal article" date="2008" name="Mol. Biol. Evol.">
        <title>Genome evolution of Wolbachia strain wPip from the Culex pipiens group.</title>
        <authorList>
            <person name="Klasson L."/>
            <person name="Walker T."/>
            <person name="Sebaihia M."/>
            <person name="Sanders M.J."/>
            <person name="Quail M.A."/>
            <person name="Lord A."/>
            <person name="Sanders S."/>
            <person name="Earl J."/>
            <person name="O'Neill S.L."/>
            <person name="Thomson N."/>
            <person name="Sinkins S.P."/>
            <person name="Parkhill J."/>
        </authorList>
    </citation>
    <scope>NUCLEOTIDE SEQUENCE [LARGE SCALE GENOMIC DNA]</scope>
    <source>
        <strain>wPip</strain>
    </source>
</reference>
<proteinExistence type="inferred from homology"/>
<protein>
    <recommendedName>
        <fullName evidence="1">tRNA N6-adenosine threonylcarbamoyltransferase</fullName>
        <ecNumber evidence="1">2.3.1.234</ecNumber>
    </recommendedName>
    <alternativeName>
        <fullName evidence="1">N6-L-threonylcarbamoyladenine synthase</fullName>
        <shortName evidence="1">t(6)A synthase</shortName>
    </alternativeName>
    <alternativeName>
        <fullName evidence="1">t(6)A37 threonylcarbamoyladenosine biosynthesis protein TsaD</fullName>
    </alternativeName>
    <alternativeName>
        <fullName evidence="1">tRNA threonylcarbamoyladenosine biosynthesis protein TsaD</fullName>
    </alternativeName>
</protein>
<feature type="chain" id="PRO_1000146041" description="tRNA N6-adenosine threonylcarbamoyltransferase">
    <location>
        <begin position="1"/>
        <end position="336"/>
    </location>
</feature>
<feature type="binding site" evidence="1">
    <location>
        <position position="111"/>
    </location>
    <ligand>
        <name>Fe cation</name>
        <dbReference type="ChEBI" id="CHEBI:24875"/>
    </ligand>
</feature>
<feature type="binding site" evidence="1">
    <location>
        <position position="115"/>
    </location>
    <ligand>
        <name>Fe cation</name>
        <dbReference type="ChEBI" id="CHEBI:24875"/>
    </ligand>
</feature>
<feature type="binding site" evidence="1">
    <location>
        <begin position="133"/>
        <end position="137"/>
    </location>
    <ligand>
        <name>substrate</name>
    </ligand>
</feature>
<feature type="binding site" evidence="1">
    <location>
        <position position="166"/>
    </location>
    <ligand>
        <name>substrate</name>
    </ligand>
</feature>
<feature type="binding site" evidence="1">
    <location>
        <position position="179"/>
    </location>
    <ligand>
        <name>substrate</name>
    </ligand>
</feature>
<feature type="binding site" evidence="1">
    <location>
        <position position="276"/>
    </location>
    <ligand>
        <name>substrate</name>
    </ligand>
</feature>
<feature type="binding site" evidence="1">
    <location>
        <position position="301"/>
    </location>
    <ligand>
        <name>Fe cation</name>
        <dbReference type="ChEBI" id="CHEBI:24875"/>
    </ligand>
</feature>
<comment type="function">
    <text evidence="1">Required for the formation of a threonylcarbamoyl group on adenosine at position 37 (t(6)A37) in tRNAs that read codons beginning with adenine. Is involved in the transfer of the threonylcarbamoyl moiety of threonylcarbamoyl-AMP (TC-AMP) to the N6 group of A37, together with TsaE and TsaB. TsaD likely plays a direct catalytic role in this reaction.</text>
</comment>
<comment type="catalytic activity">
    <reaction evidence="1">
        <text>L-threonylcarbamoyladenylate + adenosine(37) in tRNA = N(6)-L-threonylcarbamoyladenosine(37) in tRNA + AMP + H(+)</text>
        <dbReference type="Rhea" id="RHEA:37059"/>
        <dbReference type="Rhea" id="RHEA-COMP:10162"/>
        <dbReference type="Rhea" id="RHEA-COMP:10163"/>
        <dbReference type="ChEBI" id="CHEBI:15378"/>
        <dbReference type="ChEBI" id="CHEBI:73682"/>
        <dbReference type="ChEBI" id="CHEBI:74411"/>
        <dbReference type="ChEBI" id="CHEBI:74418"/>
        <dbReference type="ChEBI" id="CHEBI:456215"/>
        <dbReference type="EC" id="2.3.1.234"/>
    </reaction>
</comment>
<comment type="cofactor">
    <cofactor evidence="1">
        <name>Fe(2+)</name>
        <dbReference type="ChEBI" id="CHEBI:29033"/>
    </cofactor>
    <text evidence="1">Binds 1 Fe(2+) ion per subunit.</text>
</comment>
<comment type="subcellular location">
    <subcellularLocation>
        <location evidence="1">Cytoplasm</location>
    </subcellularLocation>
</comment>
<comment type="similarity">
    <text evidence="1">Belongs to the KAE1 / TsaD family.</text>
</comment>
<name>TSAD_WOLPP</name>
<keyword id="KW-0012">Acyltransferase</keyword>
<keyword id="KW-0963">Cytoplasm</keyword>
<keyword id="KW-0408">Iron</keyword>
<keyword id="KW-0479">Metal-binding</keyword>
<keyword id="KW-0808">Transferase</keyword>
<keyword id="KW-0819">tRNA processing</keyword>
<accession>B3CLX6</accession>
<sequence length="336" mass="36694">MKTILAIETSCDETAVAIVNSDKQVLANEILSQVEHKKCGGVIPEIASRAHMKHLSGLIKSAMEKSNLNFCDLDAIAATSGPGLIGGLIIGTMMAKAIAHVTQKPFIAVNHLEAHALVVRLLYEVEFPFLVLLISGGHCQFLIAQDVGKYIKLGETLDDSLGEAFDKVAKTLGLSYPGGPLIEELAKKGDGMRFKLPRAMIKRSGCDLSFSGIKTAVKNLAREFVMSEQDVCDMCASFQECISDILLDRVRNAIGIAVSLNIKINDFVITGGVAANNFLKERLKKHIDLNVLSPPSNLCTDNAVMVGWTGIERLQRSYVDSLDFAPRPKWELEKYY</sequence>
<gene>
    <name evidence="1" type="primary">tsaD</name>
    <name type="synonym">gcp</name>
    <name type="ordered locus">WP0786</name>
</gene>